<protein>
    <recommendedName>
        <fullName evidence="1">Fluoride-specific ion channel FluC</fullName>
    </recommendedName>
</protein>
<feature type="chain" id="PRO_0000110213" description="Fluoride-specific ion channel FluC">
    <location>
        <begin position="1"/>
        <end position="143"/>
    </location>
</feature>
<feature type="transmembrane region" description="Helical" evidence="1">
    <location>
        <begin position="3"/>
        <end position="23"/>
    </location>
</feature>
<feature type="transmembrane region" description="Helical" evidence="1">
    <location>
        <begin position="41"/>
        <end position="61"/>
    </location>
</feature>
<feature type="transmembrane region" description="Helical" evidence="1">
    <location>
        <begin position="76"/>
        <end position="96"/>
    </location>
</feature>
<feature type="transmembrane region" description="Helical" evidence="1">
    <location>
        <begin position="103"/>
        <end position="123"/>
    </location>
</feature>
<feature type="binding site" evidence="1">
    <location>
        <position position="81"/>
    </location>
    <ligand>
        <name>Na(+)</name>
        <dbReference type="ChEBI" id="CHEBI:29101"/>
        <note>structural</note>
    </ligand>
</feature>
<feature type="binding site" evidence="1">
    <location>
        <position position="84"/>
    </location>
    <ligand>
        <name>Na(+)</name>
        <dbReference type="ChEBI" id="CHEBI:29101"/>
        <note>structural</note>
    </ligand>
</feature>
<evidence type="ECO:0000255" key="1">
    <source>
        <dbReference type="HAMAP-Rule" id="MF_00454"/>
    </source>
</evidence>
<evidence type="ECO:0000305" key="2"/>
<dbReference type="EMBL" id="AE003849">
    <property type="protein sequence ID" value="AAF84263.1"/>
    <property type="status" value="ALT_INIT"/>
    <property type="molecule type" value="Genomic_DNA"/>
</dbReference>
<dbReference type="PIR" id="G82679">
    <property type="entry name" value="G82679"/>
</dbReference>
<dbReference type="RefSeq" id="WP_031336780.1">
    <property type="nucleotide sequence ID" value="NC_002488.3"/>
</dbReference>
<dbReference type="SMR" id="Q9PDC5"/>
<dbReference type="STRING" id="160492.XF_1454"/>
<dbReference type="KEGG" id="xfa:XF_1454"/>
<dbReference type="eggNOG" id="COG0239">
    <property type="taxonomic scope" value="Bacteria"/>
</dbReference>
<dbReference type="HOGENOM" id="CLU_114342_2_3_6"/>
<dbReference type="Proteomes" id="UP000000812">
    <property type="component" value="Chromosome"/>
</dbReference>
<dbReference type="GO" id="GO:0005886">
    <property type="term" value="C:plasma membrane"/>
    <property type="evidence" value="ECO:0007669"/>
    <property type="project" value="UniProtKB-SubCell"/>
</dbReference>
<dbReference type="GO" id="GO:0062054">
    <property type="term" value="F:fluoride channel activity"/>
    <property type="evidence" value="ECO:0007669"/>
    <property type="project" value="UniProtKB-UniRule"/>
</dbReference>
<dbReference type="GO" id="GO:0046872">
    <property type="term" value="F:metal ion binding"/>
    <property type="evidence" value="ECO:0007669"/>
    <property type="project" value="UniProtKB-KW"/>
</dbReference>
<dbReference type="GO" id="GO:0140114">
    <property type="term" value="P:cellular detoxification of fluoride"/>
    <property type="evidence" value="ECO:0007669"/>
    <property type="project" value="UniProtKB-UniRule"/>
</dbReference>
<dbReference type="HAMAP" id="MF_00454">
    <property type="entry name" value="FluC"/>
    <property type="match status" value="1"/>
</dbReference>
<dbReference type="InterPro" id="IPR003691">
    <property type="entry name" value="FluC"/>
</dbReference>
<dbReference type="NCBIfam" id="NF010814">
    <property type="entry name" value="PRK14218.1"/>
    <property type="match status" value="1"/>
</dbReference>
<dbReference type="PANTHER" id="PTHR28259">
    <property type="entry name" value="FLUORIDE EXPORT PROTEIN 1-RELATED"/>
    <property type="match status" value="1"/>
</dbReference>
<dbReference type="PANTHER" id="PTHR28259:SF1">
    <property type="entry name" value="FLUORIDE EXPORT PROTEIN 1-RELATED"/>
    <property type="match status" value="1"/>
</dbReference>
<dbReference type="Pfam" id="PF02537">
    <property type="entry name" value="CRCB"/>
    <property type="match status" value="1"/>
</dbReference>
<reference key="1">
    <citation type="journal article" date="2000" name="Nature">
        <title>The genome sequence of the plant pathogen Xylella fastidiosa.</title>
        <authorList>
            <person name="Simpson A.J.G."/>
            <person name="Reinach F.C."/>
            <person name="Arruda P."/>
            <person name="Abreu F.A."/>
            <person name="Acencio M."/>
            <person name="Alvarenga R."/>
            <person name="Alves L.M.C."/>
            <person name="Araya J.E."/>
            <person name="Baia G.S."/>
            <person name="Baptista C.S."/>
            <person name="Barros M.H."/>
            <person name="Bonaccorsi E.D."/>
            <person name="Bordin S."/>
            <person name="Bove J.M."/>
            <person name="Briones M.R.S."/>
            <person name="Bueno M.R.P."/>
            <person name="Camargo A.A."/>
            <person name="Camargo L.E.A."/>
            <person name="Carraro D.M."/>
            <person name="Carrer H."/>
            <person name="Colauto N.B."/>
            <person name="Colombo C."/>
            <person name="Costa F.F."/>
            <person name="Costa M.C.R."/>
            <person name="Costa-Neto C.M."/>
            <person name="Coutinho L.L."/>
            <person name="Cristofani M."/>
            <person name="Dias-Neto E."/>
            <person name="Docena C."/>
            <person name="El-Dorry H."/>
            <person name="Facincani A.P."/>
            <person name="Ferreira A.J.S."/>
            <person name="Ferreira V.C.A."/>
            <person name="Ferro J.A."/>
            <person name="Fraga J.S."/>
            <person name="Franca S.C."/>
            <person name="Franco M.C."/>
            <person name="Frohme M."/>
            <person name="Furlan L.R."/>
            <person name="Garnier M."/>
            <person name="Goldman G.H."/>
            <person name="Goldman M.H.S."/>
            <person name="Gomes S.L."/>
            <person name="Gruber A."/>
            <person name="Ho P.L."/>
            <person name="Hoheisel J.D."/>
            <person name="Junqueira M.L."/>
            <person name="Kemper E.L."/>
            <person name="Kitajima J.P."/>
            <person name="Krieger J.E."/>
            <person name="Kuramae E.E."/>
            <person name="Laigret F."/>
            <person name="Lambais M.R."/>
            <person name="Leite L.C.C."/>
            <person name="Lemos E.G.M."/>
            <person name="Lemos M.V.F."/>
            <person name="Lopes S.A."/>
            <person name="Lopes C.R."/>
            <person name="Machado J.A."/>
            <person name="Machado M.A."/>
            <person name="Madeira A.M.B.N."/>
            <person name="Madeira H.M.F."/>
            <person name="Marino C.L."/>
            <person name="Marques M.V."/>
            <person name="Martins E.A.L."/>
            <person name="Martins E.M.F."/>
            <person name="Matsukuma A.Y."/>
            <person name="Menck C.F.M."/>
            <person name="Miracca E.C."/>
            <person name="Miyaki C.Y."/>
            <person name="Monteiro-Vitorello C.B."/>
            <person name="Moon D.H."/>
            <person name="Nagai M.A."/>
            <person name="Nascimento A.L.T.O."/>
            <person name="Netto L.E.S."/>
            <person name="Nhani A. Jr."/>
            <person name="Nobrega F.G."/>
            <person name="Nunes L.R."/>
            <person name="Oliveira M.A."/>
            <person name="de Oliveira M.C."/>
            <person name="de Oliveira R.C."/>
            <person name="Palmieri D.A."/>
            <person name="Paris A."/>
            <person name="Peixoto B.R."/>
            <person name="Pereira G.A.G."/>
            <person name="Pereira H.A. Jr."/>
            <person name="Pesquero J.B."/>
            <person name="Quaggio R.B."/>
            <person name="Roberto P.G."/>
            <person name="Rodrigues V."/>
            <person name="de Rosa A.J.M."/>
            <person name="de Rosa V.E. Jr."/>
            <person name="de Sa R.G."/>
            <person name="Santelli R.V."/>
            <person name="Sawasaki H.E."/>
            <person name="da Silva A.C.R."/>
            <person name="da Silva A.M."/>
            <person name="da Silva F.R."/>
            <person name="Silva W.A. Jr."/>
            <person name="da Silveira J.F."/>
            <person name="Silvestri M.L.Z."/>
            <person name="Siqueira W.J."/>
            <person name="de Souza A.A."/>
            <person name="de Souza A.P."/>
            <person name="Terenzi M.F."/>
            <person name="Truffi D."/>
            <person name="Tsai S.M."/>
            <person name="Tsuhako M.H."/>
            <person name="Vallada H."/>
            <person name="Van Sluys M.A."/>
            <person name="Verjovski-Almeida S."/>
            <person name="Vettore A.L."/>
            <person name="Zago M.A."/>
            <person name="Zatz M."/>
            <person name="Meidanis J."/>
            <person name="Setubal J.C."/>
        </authorList>
    </citation>
    <scope>NUCLEOTIDE SEQUENCE [LARGE SCALE GENOMIC DNA]</scope>
    <source>
        <strain>9a5c</strain>
    </source>
</reference>
<sequence>MNAVVWWQSLLLVMLGGAFGSGLRFVIGSCLLQRFGAGFPWGTLAVNLIGSFVAGFLLIWLDKRGSAGWSWRMLLIVGLIGGLTTFSSLMMECLVFVRSDRSLMVGLYLCITLLFGLLFVFLGARLGAFVCDDQRVLEIDRTA</sequence>
<keyword id="KW-0997">Cell inner membrane</keyword>
<keyword id="KW-1003">Cell membrane</keyword>
<keyword id="KW-0407">Ion channel</keyword>
<keyword id="KW-0406">Ion transport</keyword>
<keyword id="KW-0472">Membrane</keyword>
<keyword id="KW-0479">Metal-binding</keyword>
<keyword id="KW-0915">Sodium</keyword>
<keyword id="KW-0812">Transmembrane</keyword>
<keyword id="KW-1133">Transmembrane helix</keyword>
<keyword id="KW-0813">Transport</keyword>
<proteinExistence type="inferred from homology"/>
<gene>
    <name evidence="1" type="primary">fluC</name>
    <name evidence="1" type="synonym">crcB</name>
    <name type="ordered locus">XF_1454</name>
</gene>
<accession>Q9PDC5</accession>
<comment type="function">
    <text evidence="1">Fluoride-specific ion channel. Important for reducing fluoride concentration in the cell, thus reducing its toxicity.</text>
</comment>
<comment type="catalytic activity">
    <reaction evidence="1">
        <text>fluoride(in) = fluoride(out)</text>
        <dbReference type="Rhea" id="RHEA:76159"/>
        <dbReference type="ChEBI" id="CHEBI:17051"/>
    </reaction>
    <physiologicalReaction direction="left-to-right" evidence="1">
        <dbReference type="Rhea" id="RHEA:76160"/>
    </physiologicalReaction>
</comment>
<comment type="activity regulation">
    <text evidence="1">Na(+) is not transported, but it plays an essential structural role and its presence is essential for fluoride channel function.</text>
</comment>
<comment type="subcellular location">
    <subcellularLocation>
        <location evidence="1">Cell inner membrane</location>
        <topology evidence="1">Multi-pass membrane protein</topology>
    </subcellularLocation>
</comment>
<comment type="similarity">
    <text evidence="1">Belongs to the fluoride channel Fluc/FEX (TC 1.A.43) family.</text>
</comment>
<comment type="sequence caution" evidence="2">
    <conflict type="erroneous initiation">
        <sequence resource="EMBL-CDS" id="AAF84263"/>
    </conflict>
</comment>
<name>FLUC_XYLFA</name>
<organism>
    <name type="scientific">Xylella fastidiosa (strain 9a5c)</name>
    <dbReference type="NCBI Taxonomy" id="160492"/>
    <lineage>
        <taxon>Bacteria</taxon>
        <taxon>Pseudomonadati</taxon>
        <taxon>Pseudomonadota</taxon>
        <taxon>Gammaproteobacteria</taxon>
        <taxon>Lysobacterales</taxon>
        <taxon>Lysobacteraceae</taxon>
        <taxon>Xylella</taxon>
    </lineage>
</organism>